<organism>
    <name type="scientific">Neurospora crassa (strain ATCC 24698 / 74-OR23-1A / CBS 708.71 / DSM 1257 / FGSC 987)</name>
    <dbReference type="NCBI Taxonomy" id="367110"/>
    <lineage>
        <taxon>Eukaryota</taxon>
        <taxon>Fungi</taxon>
        <taxon>Dikarya</taxon>
        <taxon>Ascomycota</taxon>
        <taxon>Pezizomycotina</taxon>
        <taxon>Sordariomycetes</taxon>
        <taxon>Sordariomycetidae</taxon>
        <taxon>Sordariales</taxon>
        <taxon>Sordariaceae</taxon>
        <taxon>Neurospora</taxon>
    </lineage>
</organism>
<keyword id="KW-0378">Hydrolase</keyword>
<keyword id="KW-0479">Metal-binding</keyword>
<keyword id="KW-0507">mRNA processing</keyword>
<keyword id="KW-0540">Nuclease</keyword>
<keyword id="KW-0547">Nucleotide-binding</keyword>
<keyword id="KW-0539">Nucleus</keyword>
<keyword id="KW-1185">Reference proteome</keyword>
<keyword id="KW-0694">RNA-binding</keyword>
<proteinExistence type="inferred from homology"/>
<gene>
    <name type="primary">rai1</name>
    <name type="ORF">B13O20.160</name>
    <name type="ORF">NCU04191</name>
</gene>
<evidence type="ECO:0000250" key="1">
    <source>
        <dbReference type="UniProtKB" id="O13836"/>
    </source>
</evidence>
<evidence type="ECO:0000250" key="2">
    <source>
        <dbReference type="UniProtKB" id="O70348"/>
    </source>
</evidence>
<evidence type="ECO:0000250" key="3">
    <source>
        <dbReference type="UniProtKB" id="P53063"/>
    </source>
</evidence>
<evidence type="ECO:0000250" key="4">
    <source>
        <dbReference type="UniProtKB" id="Q06349"/>
    </source>
</evidence>
<evidence type="ECO:0000250" key="5">
    <source>
        <dbReference type="UniProtKB" id="Q5AAT0"/>
    </source>
</evidence>
<evidence type="ECO:0000305" key="6"/>
<comment type="function">
    <text evidence="1 2 4 5">Decapping enzyme for NAD-capped RNAs: specifically hydrolyzes the nicotinamide adenine dinucleotide (NAD) cap from a subset of RNAs by removing the entire NAD moiety from the 5'-end of an NAD-capped RNA (By similarity). The NAD-cap is present at the 5'-end of some RNAs and snoRNAs. In contrast to the canonical 5'-end N7 methylguanosine (m7G) cap, the NAD cap promotes mRNA decay (By similarity). Also acts as a non-canonical decapping enzyme that removes the entire cap structure of m7G capped or incompletely capped RNAs (By similarity). Has decapping activity toward incomplete 5'-end m7G cap mRNAs such as unmethylated 5'-end-capped RNA (cap0), while it has no activity toward 2'-O-ribose methylated m7G cap (cap1) (By similarity). Also possesses RNA 5'-pyrophosphohydrolase activity by hydrolyzing the 5'-end triphosphate to release pyrophosphates (By similarity). Stimulates exoribonuclease activity of Rat1, allowing it to degrade RNAs with stable secondary structure more effectively (By similarity).</text>
</comment>
<comment type="catalytic activity">
    <reaction evidence="1">
        <text>a 5'-end NAD(+)-phospho-ribonucleoside in mRNA + H2O = a 5'-end phospho-ribonucleoside in mRNA + NAD(+) + H(+)</text>
        <dbReference type="Rhea" id="RHEA:60880"/>
        <dbReference type="Rhea" id="RHEA-COMP:15692"/>
        <dbReference type="Rhea" id="RHEA-COMP:15698"/>
        <dbReference type="ChEBI" id="CHEBI:15377"/>
        <dbReference type="ChEBI" id="CHEBI:15378"/>
        <dbReference type="ChEBI" id="CHEBI:57540"/>
        <dbReference type="ChEBI" id="CHEBI:138282"/>
        <dbReference type="ChEBI" id="CHEBI:144029"/>
    </reaction>
    <physiologicalReaction direction="left-to-right" evidence="1">
        <dbReference type="Rhea" id="RHEA:60881"/>
    </physiologicalReaction>
</comment>
<comment type="catalytic activity">
    <reaction evidence="3">
        <text>a 5'-end (N(7)-methyl 5'-triphosphoguanosine)-ribonucleoside-ribonucleotide in mRNA + H2O = a (N(7)-methyl 5'-triphosphoguanosine)-nucleoside + a 5'-end phospho-ribonucleoside in mRNA + H(+)</text>
        <dbReference type="Rhea" id="RHEA:66928"/>
        <dbReference type="Rhea" id="RHEA-COMP:15692"/>
        <dbReference type="Rhea" id="RHEA-COMP:17313"/>
        <dbReference type="ChEBI" id="CHEBI:15377"/>
        <dbReference type="ChEBI" id="CHEBI:15378"/>
        <dbReference type="ChEBI" id="CHEBI:138282"/>
        <dbReference type="ChEBI" id="CHEBI:172876"/>
        <dbReference type="ChEBI" id="CHEBI:172877"/>
    </reaction>
    <physiologicalReaction direction="left-to-right" evidence="3">
        <dbReference type="Rhea" id="RHEA:66929"/>
    </physiologicalReaction>
</comment>
<comment type="catalytic activity">
    <reaction evidence="1">
        <text>a 5'-end triphospho-ribonucleoside in mRNA + H2O = a 5'-end phospho-ribonucleoside in mRNA + diphosphate + H(+)</text>
        <dbReference type="Rhea" id="RHEA:78683"/>
        <dbReference type="Rhea" id="RHEA-COMP:15692"/>
        <dbReference type="Rhea" id="RHEA-COMP:17164"/>
        <dbReference type="ChEBI" id="CHEBI:15377"/>
        <dbReference type="ChEBI" id="CHEBI:15378"/>
        <dbReference type="ChEBI" id="CHEBI:33019"/>
        <dbReference type="ChEBI" id="CHEBI:138282"/>
        <dbReference type="ChEBI" id="CHEBI:167618"/>
    </reaction>
    <physiologicalReaction direction="left-to-right" evidence="1">
        <dbReference type="Rhea" id="RHEA:78684"/>
    </physiologicalReaction>
</comment>
<comment type="cofactor">
    <cofactor evidence="5">
        <name>a divalent metal cation</name>
        <dbReference type="ChEBI" id="CHEBI:60240"/>
    </cofactor>
    <text evidence="5">Divalent metal cation.</text>
</comment>
<comment type="subunit">
    <text evidence="1">Interacts with exr-1/rat1; the interaction is direct, stabilizes exr-1 protein structure and stimulates its exoribonuclease activity (By similarity). The interaction also stimulates rai1 pyrophosphohydrolase activity, probably by recruiting it to mRNA substrates (By similarity).</text>
</comment>
<comment type="subcellular location">
    <subcellularLocation>
        <location evidence="3">Nucleus</location>
    </subcellularLocation>
</comment>
<comment type="similarity">
    <text evidence="6">Belongs to the DXO/Dom3Z family.</text>
</comment>
<comment type="sequence caution" evidence="6">
    <conflict type="erroneous gene model prediction">
        <sequence resource="EMBL-CDS" id="CAC18206"/>
    </conflict>
</comment>
<protein>
    <recommendedName>
        <fullName evidence="6">Decapping nuclease RAI1</fullName>
        <ecNumber evidence="5">3.6.1.-</ecNumber>
    </recommendedName>
    <alternativeName>
        <fullName evidence="6">NAD-capped RNA hydrolase rai1</fullName>
        <shortName evidence="6">DeNADding enzyme rai1</shortName>
        <ecNumber evidence="1">3.6.1.-</ecNumber>
    </alternativeName>
</protein>
<dbReference type="EC" id="3.6.1.-" evidence="5 1"/>
<dbReference type="EMBL" id="AL451015">
    <property type="protein sequence ID" value="CAC18206.1"/>
    <property type="status" value="ALT_SEQ"/>
    <property type="molecule type" value="Genomic_DNA"/>
</dbReference>
<dbReference type="EMBL" id="CM002240">
    <property type="protein sequence ID" value="EAA31915.3"/>
    <property type="molecule type" value="Genomic_DNA"/>
</dbReference>
<dbReference type="RefSeq" id="XP_961151.3">
    <property type="nucleotide sequence ID" value="XM_956058.3"/>
</dbReference>
<dbReference type="SMR" id="Q9HE87"/>
<dbReference type="FunCoup" id="Q9HE87">
    <property type="interactions" value="607"/>
</dbReference>
<dbReference type="STRING" id="367110.Q9HE87"/>
<dbReference type="EnsemblFungi" id="EAA31915">
    <property type="protein sequence ID" value="EAA31915"/>
    <property type="gene ID" value="NCU04191"/>
</dbReference>
<dbReference type="GeneID" id="3877317"/>
<dbReference type="KEGG" id="ncr:NCU04191"/>
<dbReference type="VEuPathDB" id="FungiDB:NCU04191"/>
<dbReference type="HOGENOM" id="CLU_024877_4_1_1"/>
<dbReference type="InParanoid" id="Q9HE87"/>
<dbReference type="OrthoDB" id="5853397at2759"/>
<dbReference type="Proteomes" id="UP000001805">
    <property type="component" value="Chromosome 2, Linkage Group V"/>
</dbReference>
<dbReference type="GO" id="GO:0005829">
    <property type="term" value="C:cytosol"/>
    <property type="evidence" value="ECO:0000318"/>
    <property type="project" value="GO_Central"/>
</dbReference>
<dbReference type="GO" id="GO:0005634">
    <property type="term" value="C:nucleus"/>
    <property type="evidence" value="ECO:0000318"/>
    <property type="project" value="GO_Central"/>
</dbReference>
<dbReference type="GO" id="GO:0140432">
    <property type="term" value="F:5'-hydroxyl dinucleotide hydrolase activity"/>
    <property type="evidence" value="ECO:0007669"/>
    <property type="project" value="EnsemblFungi"/>
</dbReference>
<dbReference type="GO" id="GO:0019003">
    <property type="term" value="F:GDP binding"/>
    <property type="evidence" value="ECO:0007669"/>
    <property type="project" value="EnsemblFungi"/>
</dbReference>
<dbReference type="GO" id="GO:0046872">
    <property type="term" value="F:metal ion binding"/>
    <property type="evidence" value="ECO:0007669"/>
    <property type="project" value="UniProtKB-KW"/>
</dbReference>
<dbReference type="GO" id="GO:0034353">
    <property type="term" value="F:mRNA 5'-diphosphatase activity"/>
    <property type="evidence" value="ECO:0000318"/>
    <property type="project" value="GO_Central"/>
</dbReference>
<dbReference type="GO" id="GO:1990174">
    <property type="term" value="F:phosphodiesterase decapping endonuclease activity"/>
    <property type="evidence" value="ECO:0007669"/>
    <property type="project" value="EnsemblFungi"/>
</dbReference>
<dbReference type="GO" id="GO:0003723">
    <property type="term" value="F:RNA binding"/>
    <property type="evidence" value="ECO:0007669"/>
    <property type="project" value="UniProtKB-KW"/>
</dbReference>
<dbReference type="GO" id="GO:0110152">
    <property type="term" value="F:RNA NAD+-cap (NAD+-forming) hydrolase activity"/>
    <property type="evidence" value="ECO:0007669"/>
    <property type="project" value="EnsemblFungi"/>
</dbReference>
<dbReference type="GO" id="GO:0006397">
    <property type="term" value="P:mRNA processing"/>
    <property type="evidence" value="ECO:0007669"/>
    <property type="project" value="UniProtKB-KW"/>
</dbReference>
<dbReference type="GO" id="GO:0110155">
    <property type="term" value="P:NAD-cap decapping"/>
    <property type="evidence" value="ECO:0000318"/>
    <property type="project" value="GO_Central"/>
</dbReference>
<dbReference type="GO" id="GO:0000956">
    <property type="term" value="P:nuclear-transcribed mRNA catabolic process"/>
    <property type="evidence" value="ECO:0000318"/>
    <property type="project" value="GO_Central"/>
</dbReference>
<dbReference type="InterPro" id="IPR013961">
    <property type="entry name" value="RAI1"/>
</dbReference>
<dbReference type="InterPro" id="IPR039039">
    <property type="entry name" value="RAI1-like_fam"/>
</dbReference>
<dbReference type="PANTHER" id="PTHR12395:SF9">
    <property type="entry name" value="DECAPPING AND EXORIBONUCLEASE PROTEIN"/>
    <property type="match status" value="1"/>
</dbReference>
<dbReference type="PANTHER" id="PTHR12395">
    <property type="entry name" value="DOM-3 RELATED"/>
    <property type="match status" value="1"/>
</dbReference>
<dbReference type="Pfam" id="PF08652">
    <property type="entry name" value="RAI1"/>
    <property type="match status" value="1"/>
</dbReference>
<reference key="1">
    <citation type="journal article" date="2003" name="Nucleic Acids Res.">
        <title>What's in the genome of a filamentous fungus? Analysis of the Neurospora genome sequence.</title>
        <authorList>
            <person name="Mannhaupt G."/>
            <person name="Montrone C."/>
            <person name="Haase D."/>
            <person name="Mewes H.-W."/>
            <person name="Aign V."/>
            <person name="Hoheisel J.D."/>
            <person name="Fartmann B."/>
            <person name="Nyakatura G."/>
            <person name="Kempken F."/>
            <person name="Maier J."/>
            <person name="Schulte U."/>
        </authorList>
    </citation>
    <scope>NUCLEOTIDE SEQUENCE [LARGE SCALE GENOMIC DNA]</scope>
    <source>
        <strain>ATCC 24698 / 74-OR23-1A / CBS 708.71 / DSM 1257 / FGSC 987</strain>
    </source>
</reference>
<reference key="2">
    <citation type="journal article" date="2003" name="Nature">
        <title>The genome sequence of the filamentous fungus Neurospora crassa.</title>
        <authorList>
            <person name="Galagan J.E."/>
            <person name="Calvo S.E."/>
            <person name="Borkovich K.A."/>
            <person name="Selker E.U."/>
            <person name="Read N.D."/>
            <person name="Jaffe D.B."/>
            <person name="FitzHugh W."/>
            <person name="Ma L.-J."/>
            <person name="Smirnov S."/>
            <person name="Purcell S."/>
            <person name="Rehman B."/>
            <person name="Elkins T."/>
            <person name="Engels R."/>
            <person name="Wang S."/>
            <person name="Nielsen C.B."/>
            <person name="Butler J."/>
            <person name="Endrizzi M."/>
            <person name="Qui D."/>
            <person name="Ianakiev P."/>
            <person name="Bell-Pedersen D."/>
            <person name="Nelson M.A."/>
            <person name="Werner-Washburne M."/>
            <person name="Selitrennikoff C.P."/>
            <person name="Kinsey J.A."/>
            <person name="Braun E.L."/>
            <person name="Zelter A."/>
            <person name="Schulte U."/>
            <person name="Kothe G.O."/>
            <person name="Jedd G."/>
            <person name="Mewes H.-W."/>
            <person name="Staben C."/>
            <person name="Marcotte E."/>
            <person name="Greenberg D."/>
            <person name="Roy A."/>
            <person name="Foley K."/>
            <person name="Naylor J."/>
            <person name="Stange-Thomann N."/>
            <person name="Barrett R."/>
            <person name="Gnerre S."/>
            <person name="Kamal M."/>
            <person name="Kamvysselis M."/>
            <person name="Mauceli E.W."/>
            <person name="Bielke C."/>
            <person name="Rudd S."/>
            <person name="Frishman D."/>
            <person name="Krystofova S."/>
            <person name="Rasmussen C."/>
            <person name="Metzenberg R.L."/>
            <person name="Perkins D.D."/>
            <person name="Kroken S."/>
            <person name="Cogoni C."/>
            <person name="Macino G."/>
            <person name="Catcheside D.E.A."/>
            <person name="Li W."/>
            <person name="Pratt R.J."/>
            <person name="Osmani S.A."/>
            <person name="DeSouza C.P.C."/>
            <person name="Glass N.L."/>
            <person name="Orbach M.J."/>
            <person name="Berglund J.A."/>
            <person name="Voelker R."/>
            <person name="Yarden O."/>
            <person name="Plamann M."/>
            <person name="Seiler S."/>
            <person name="Dunlap J.C."/>
            <person name="Radford A."/>
            <person name="Aramayo R."/>
            <person name="Natvig D.O."/>
            <person name="Alex L.A."/>
            <person name="Mannhaupt G."/>
            <person name="Ebbole D.J."/>
            <person name="Freitag M."/>
            <person name="Paulsen I."/>
            <person name="Sachs M.S."/>
            <person name="Lander E.S."/>
            <person name="Nusbaum C."/>
            <person name="Birren B.W."/>
        </authorList>
    </citation>
    <scope>NUCLEOTIDE SEQUENCE [LARGE SCALE GENOMIC DNA]</scope>
    <source>
        <strain>ATCC 24698 / 74-OR23-1A / CBS 708.71 / DSM 1257 / FGSC 987</strain>
    </source>
</reference>
<accession>Q9HE87</accession>
<feature type="chain" id="PRO_0000249836" description="Decapping nuclease RAI1">
    <location>
        <begin position="1"/>
        <end position="412"/>
    </location>
</feature>
<feature type="binding site" evidence="1">
    <location>
        <position position="196"/>
    </location>
    <ligand>
        <name>a divalent metal cation</name>
        <dbReference type="ChEBI" id="CHEBI:60240"/>
    </ligand>
</feature>
<feature type="binding site" evidence="2">
    <location>
        <position position="228"/>
    </location>
    <ligand>
        <name>substrate</name>
    </ligand>
</feature>
<feature type="binding site" evidence="2">
    <location>
        <position position="245"/>
    </location>
    <ligand>
        <name>substrate</name>
    </ligand>
</feature>
<feature type="binding site" evidence="1">
    <location>
        <position position="247"/>
    </location>
    <ligand>
        <name>a divalent metal cation</name>
        <dbReference type="ChEBI" id="CHEBI:60240"/>
    </ligand>
</feature>
<feature type="binding site" evidence="1">
    <location>
        <position position="265"/>
    </location>
    <ligand>
        <name>a divalent metal cation</name>
        <dbReference type="ChEBI" id="CHEBI:60240"/>
    </ligand>
</feature>
<feature type="binding site" evidence="1">
    <location>
        <position position="266"/>
    </location>
    <ligand>
        <name>a divalent metal cation</name>
        <dbReference type="ChEBI" id="CHEBI:60240"/>
    </ligand>
</feature>
<feature type="binding site" evidence="2">
    <location>
        <position position="267"/>
    </location>
    <ligand>
        <name>substrate</name>
    </ligand>
</feature>
<feature type="binding site" evidence="2">
    <location>
        <position position="291"/>
    </location>
    <ligand>
        <name>substrate</name>
    </ligand>
</feature>
<sequence length="412" mass="47743">MITRQVLILGHWNSRFRAFIHIHSAGQPLFSTMTAAFPIQPVARFAGKSELVKRPKEFACFSYDADHKFLLGAQSLKWYYTPDLNVDLSKGFESFIKHDDSVDEHLDSLLTTIADYEQKTSKPIDAHIVTWRGMMTKIMAAPFDDDDGFEMNATLYRGCIFIEENHAYKQASRANERPWNGPIPQEVMQYWGYKFETLSTLPKPWGQTSRDFIESRPDHVVNNKEQYCSVVRTGIGKTILCIGGEVDAIWDDKPRTQGDPINWVELKTSAVIQNERQANNFERKLMKFWIQSFLLGVPKIIVGFRTQDGLLVETKEFRTMEIPLMVKKNGRPKWDGDTCVNFANGFLEWLRHTITDEGVWRIKRRPRSAEIEVFKVEEVGHGDIITDEFMNWRIKLELRQAQPPTEDNETEE</sequence>
<name>DXO_NEUCR</name>